<sequence length="436" mass="46729">MTSTLHSTSFNTTRSKQVFARAQSLMPGGVSSPVRAFKSVGGDPVVFDRVSGAYAWDVDGNQYIDYIGSWGPAIVGHAHPEVIEALRRALEKGTSFGAPCVLENELAERVIEAVPSVEMVRFVNSGTEACMAVLRLMRAYTGREKVIKFEGCYHGHADMFLVKAGSGVATLGLPDSPGVPKAATSATLTAPYNDLEAVKALFEQHPDSIAGVILEPVVGNAGFIPPQPGFLEGLRDLTQKYGALLVFDEVMTGFRISYGGVQAKFGVIPDLTTLGKVIGGGLPVGAYGGRREIMEMVAPAGPMYQAGTLSGNPLAMTAGIQTLDILRRPGTYEYLERITEKLATGLLQIARETGHEMCGGYLPGMFGFFFTAGPVRNYEEAKTSDLQKFARFHRGMLERGVYLAPSQFEAGFTSLAHTEADVEKTLAAAREVLSTL</sequence>
<proteinExistence type="inferred from homology"/>
<reference key="1">
    <citation type="journal article" date="2007" name="ISME J.">
        <title>Population level functional diversity in a microbial community revealed by comparative genomic and metagenomic analyses.</title>
        <authorList>
            <person name="Bhaya D."/>
            <person name="Grossman A.R."/>
            <person name="Steunou A.-S."/>
            <person name="Khuri N."/>
            <person name="Cohan F.M."/>
            <person name="Hamamura N."/>
            <person name="Melendrez M.C."/>
            <person name="Bateson M.M."/>
            <person name="Ward D.M."/>
            <person name="Heidelberg J.F."/>
        </authorList>
    </citation>
    <scope>NUCLEOTIDE SEQUENCE [LARGE SCALE GENOMIC DNA]</scope>
    <source>
        <strain>JA-2-3B'a(2-13)</strain>
    </source>
</reference>
<evidence type="ECO:0000255" key="1">
    <source>
        <dbReference type="HAMAP-Rule" id="MF_00375"/>
    </source>
</evidence>
<name>GSA_SYNJB</name>
<keyword id="KW-0149">Chlorophyll biosynthesis</keyword>
<keyword id="KW-0963">Cytoplasm</keyword>
<keyword id="KW-0413">Isomerase</keyword>
<keyword id="KW-0627">Porphyrin biosynthesis</keyword>
<keyword id="KW-0663">Pyridoxal phosphate</keyword>
<keyword id="KW-1185">Reference proteome</keyword>
<protein>
    <recommendedName>
        <fullName evidence="1">Glutamate-1-semialdehyde 2,1-aminomutase</fullName>
        <shortName evidence="1">GSA</shortName>
        <ecNumber evidence="1">5.4.3.8</ecNumber>
    </recommendedName>
    <alternativeName>
        <fullName evidence="1">Glutamate-1-semialdehyde aminotransferase</fullName>
        <shortName evidence="1">GSA-AT</shortName>
    </alternativeName>
</protein>
<organism>
    <name type="scientific">Synechococcus sp. (strain JA-2-3B'a(2-13))</name>
    <name type="common">Cyanobacteria bacterium Yellowstone B-Prime</name>
    <dbReference type="NCBI Taxonomy" id="321332"/>
    <lineage>
        <taxon>Bacteria</taxon>
        <taxon>Bacillati</taxon>
        <taxon>Cyanobacteriota</taxon>
        <taxon>Cyanophyceae</taxon>
        <taxon>Synechococcales</taxon>
        <taxon>Synechococcaceae</taxon>
        <taxon>Synechococcus</taxon>
    </lineage>
</organism>
<comment type="catalytic activity">
    <reaction evidence="1">
        <text>(S)-4-amino-5-oxopentanoate = 5-aminolevulinate</text>
        <dbReference type="Rhea" id="RHEA:14265"/>
        <dbReference type="ChEBI" id="CHEBI:57501"/>
        <dbReference type="ChEBI" id="CHEBI:356416"/>
        <dbReference type="EC" id="5.4.3.8"/>
    </reaction>
</comment>
<comment type="cofactor">
    <cofactor evidence="1">
        <name>pyridoxal 5'-phosphate</name>
        <dbReference type="ChEBI" id="CHEBI:597326"/>
    </cofactor>
</comment>
<comment type="pathway">
    <text evidence="1">Porphyrin-containing compound metabolism; protoporphyrin-IX biosynthesis; 5-aminolevulinate from L-glutamyl-tRNA(Glu): step 2/2.</text>
</comment>
<comment type="pathway">
    <text evidence="1">Porphyrin-containing compound metabolism; chlorophyll biosynthesis.</text>
</comment>
<comment type="subunit">
    <text evidence="1">Homodimer.</text>
</comment>
<comment type="subcellular location">
    <subcellularLocation>
        <location evidence="1">Cytoplasm</location>
    </subcellularLocation>
</comment>
<comment type="similarity">
    <text evidence="1">Belongs to the class-III pyridoxal-phosphate-dependent aminotransferase family. HemL subfamily.</text>
</comment>
<accession>Q2JMP7</accession>
<gene>
    <name evidence="1" type="primary">hemL</name>
    <name type="ordered locus">CYB_1012</name>
</gene>
<dbReference type="EC" id="5.4.3.8" evidence="1"/>
<dbReference type="EMBL" id="CP000240">
    <property type="protein sequence ID" value="ABD01990.1"/>
    <property type="molecule type" value="Genomic_DNA"/>
</dbReference>
<dbReference type="RefSeq" id="WP_011432645.1">
    <property type="nucleotide sequence ID" value="NC_007776.1"/>
</dbReference>
<dbReference type="SMR" id="Q2JMP7"/>
<dbReference type="STRING" id="321332.CYB_1012"/>
<dbReference type="KEGG" id="cyb:CYB_1012"/>
<dbReference type="eggNOG" id="COG0001">
    <property type="taxonomic scope" value="Bacteria"/>
</dbReference>
<dbReference type="HOGENOM" id="CLU_016922_1_5_3"/>
<dbReference type="OrthoDB" id="9807885at2"/>
<dbReference type="UniPathway" id="UPA00251">
    <property type="reaction ID" value="UER00317"/>
</dbReference>
<dbReference type="UniPathway" id="UPA00668"/>
<dbReference type="Proteomes" id="UP000001938">
    <property type="component" value="Chromosome"/>
</dbReference>
<dbReference type="GO" id="GO:0005737">
    <property type="term" value="C:cytoplasm"/>
    <property type="evidence" value="ECO:0007669"/>
    <property type="project" value="UniProtKB-SubCell"/>
</dbReference>
<dbReference type="GO" id="GO:0042286">
    <property type="term" value="F:glutamate-1-semialdehyde 2,1-aminomutase activity"/>
    <property type="evidence" value="ECO:0007669"/>
    <property type="project" value="UniProtKB-UniRule"/>
</dbReference>
<dbReference type="GO" id="GO:0030170">
    <property type="term" value="F:pyridoxal phosphate binding"/>
    <property type="evidence" value="ECO:0007669"/>
    <property type="project" value="InterPro"/>
</dbReference>
<dbReference type="GO" id="GO:0008483">
    <property type="term" value="F:transaminase activity"/>
    <property type="evidence" value="ECO:0007669"/>
    <property type="project" value="InterPro"/>
</dbReference>
<dbReference type="GO" id="GO:0015995">
    <property type="term" value="P:chlorophyll biosynthetic process"/>
    <property type="evidence" value="ECO:0007669"/>
    <property type="project" value="UniProtKB-UniRule"/>
</dbReference>
<dbReference type="GO" id="GO:0006782">
    <property type="term" value="P:protoporphyrinogen IX biosynthetic process"/>
    <property type="evidence" value="ECO:0007669"/>
    <property type="project" value="UniProtKB-UniRule"/>
</dbReference>
<dbReference type="CDD" id="cd00610">
    <property type="entry name" value="OAT_like"/>
    <property type="match status" value="1"/>
</dbReference>
<dbReference type="FunFam" id="3.40.640.10:FF:000021">
    <property type="entry name" value="Glutamate-1-semialdehyde 2,1-aminomutase"/>
    <property type="match status" value="1"/>
</dbReference>
<dbReference type="FunFam" id="3.90.1150.10:FF:000012">
    <property type="entry name" value="Glutamate-1-semialdehyde 2,1-aminomutase"/>
    <property type="match status" value="1"/>
</dbReference>
<dbReference type="Gene3D" id="3.90.1150.10">
    <property type="entry name" value="Aspartate Aminotransferase, domain 1"/>
    <property type="match status" value="1"/>
</dbReference>
<dbReference type="Gene3D" id="3.40.640.10">
    <property type="entry name" value="Type I PLP-dependent aspartate aminotransferase-like (Major domain)"/>
    <property type="match status" value="1"/>
</dbReference>
<dbReference type="HAMAP" id="MF_00375">
    <property type="entry name" value="HemL_aminotrans_3"/>
    <property type="match status" value="1"/>
</dbReference>
<dbReference type="InterPro" id="IPR004639">
    <property type="entry name" value="4pyrrol_synth_GluAld_NH2Trfase"/>
</dbReference>
<dbReference type="InterPro" id="IPR005814">
    <property type="entry name" value="Aminotrans_3"/>
</dbReference>
<dbReference type="InterPro" id="IPR049704">
    <property type="entry name" value="Aminotrans_3_PPA_site"/>
</dbReference>
<dbReference type="InterPro" id="IPR015424">
    <property type="entry name" value="PyrdxlP-dep_Trfase"/>
</dbReference>
<dbReference type="InterPro" id="IPR015421">
    <property type="entry name" value="PyrdxlP-dep_Trfase_major"/>
</dbReference>
<dbReference type="InterPro" id="IPR015422">
    <property type="entry name" value="PyrdxlP-dep_Trfase_small"/>
</dbReference>
<dbReference type="NCBIfam" id="TIGR00713">
    <property type="entry name" value="hemL"/>
    <property type="match status" value="1"/>
</dbReference>
<dbReference type="NCBIfam" id="NF000818">
    <property type="entry name" value="PRK00062.1"/>
    <property type="match status" value="1"/>
</dbReference>
<dbReference type="PANTHER" id="PTHR43713">
    <property type="entry name" value="GLUTAMATE-1-SEMIALDEHYDE 2,1-AMINOMUTASE"/>
    <property type="match status" value="1"/>
</dbReference>
<dbReference type="PANTHER" id="PTHR43713:SF3">
    <property type="entry name" value="GLUTAMATE-1-SEMIALDEHYDE 2,1-AMINOMUTASE 1, CHLOROPLASTIC-RELATED"/>
    <property type="match status" value="1"/>
</dbReference>
<dbReference type="Pfam" id="PF00202">
    <property type="entry name" value="Aminotran_3"/>
    <property type="match status" value="1"/>
</dbReference>
<dbReference type="SUPFAM" id="SSF53383">
    <property type="entry name" value="PLP-dependent transferases"/>
    <property type="match status" value="1"/>
</dbReference>
<dbReference type="PROSITE" id="PS00600">
    <property type="entry name" value="AA_TRANSFER_CLASS_3"/>
    <property type="match status" value="1"/>
</dbReference>
<feature type="chain" id="PRO_0000243629" description="Glutamate-1-semialdehyde 2,1-aminomutase">
    <location>
        <begin position="1"/>
        <end position="436"/>
    </location>
</feature>
<feature type="modified residue" description="N6-(pyridoxal phosphate)lysine" evidence="1">
    <location>
        <position position="276"/>
    </location>
</feature>